<feature type="chain" id="PRO_0000198351" description="Protein FrzA">
    <location>
        <begin position="1"/>
        <end position="160"/>
    </location>
</feature>
<feature type="domain" description="CheW-like" evidence="1">
    <location>
        <begin position="14"/>
        <end position="155"/>
    </location>
</feature>
<proteinExistence type="predicted"/>
<evidence type="ECO:0000255" key="1">
    <source>
        <dbReference type="PROSITE-ProRule" id="PRU00052"/>
    </source>
</evidence>
<protein>
    <recommendedName>
        <fullName>Protein FrzA</fullName>
    </recommendedName>
    <alternativeName>
        <fullName>Frizzy aggregation protein A</fullName>
    </alternativeName>
</protein>
<accession>P43498</accession>
<dbReference type="EMBL" id="J04157">
    <property type="protein sequence ID" value="AAA25393.1"/>
    <property type="molecule type" value="Genomic_DNA"/>
</dbReference>
<dbReference type="PIR" id="A32185">
    <property type="entry name" value="A32185"/>
</dbReference>
<dbReference type="RefSeq" id="WP_011554146.1">
    <property type="nucleotide sequence ID" value="NZ_JABFNT010000152.1"/>
</dbReference>
<dbReference type="SMR" id="P43498"/>
<dbReference type="OMA" id="AIVHCGP"/>
<dbReference type="GO" id="GO:0005829">
    <property type="term" value="C:cytosol"/>
    <property type="evidence" value="ECO:0007669"/>
    <property type="project" value="TreeGrafter"/>
</dbReference>
<dbReference type="GO" id="GO:0006935">
    <property type="term" value="P:chemotaxis"/>
    <property type="evidence" value="ECO:0007669"/>
    <property type="project" value="UniProtKB-KW"/>
</dbReference>
<dbReference type="GO" id="GO:0007165">
    <property type="term" value="P:signal transduction"/>
    <property type="evidence" value="ECO:0007669"/>
    <property type="project" value="UniProtKB-KW"/>
</dbReference>
<dbReference type="CDD" id="cd00732">
    <property type="entry name" value="CheW"/>
    <property type="match status" value="1"/>
</dbReference>
<dbReference type="Gene3D" id="2.40.50.180">
    <property type="entry name" value="CheA-289, Domain 4"/>
    <property type="match status" value="1"/>
</dbReference>
<dbReference type="Gene3D" id="2.30.30.40">
    <property type="entry name" value="SH3 Domains"/>
    <property type="match status" value="1"/>
</dbReference>
<dbReference type="InterPro" id="IPR039315">
    <property type="entry name" value="CheW"/>
</dbReference>
<dbReference type="InterPro" id="IPR036061">
    <property type="entry name" value="CheW-like_dom_sf"/>
</dbReference>
<dbReference type="InterPro" id="IPR002545">
    <property type="entry name" value="CheW-lke_dom"/>
</dbReference>
<dbReference type="PANTHER" id="PTHR22617:SF23">
    <property type="entry name" value="CHEMOTAXIS PROTEIN CHEW"/>
    <property type="match status" value="1"/>
</dbReference>
<dbReference type="PANTHER" id="PTHR22617">
    <property type="entry name" value="CHEMOTAXIS SENSOR HISTIDINE KINASE-RELATED"/>
    <property type="match status" value="1"/>
</dbReference>
<dbReference type="Pfam" id="PF01584">
    <property type="entry name" value="CheW"/>
    <property type="match status" value="1"/>
</dbReference>
<dbReference type="SMART" id="SM00260">
    <property type="entry name" value="CheW"/>
    <property type="match status" value="1"/>
</dbReference>
<dbReference type="SUPFAM" id="SSF50341">
    <property type="entry name" value="CheW-like"/>
    <property type="match status" value="1"/>
</dbReference>
<dbReference type="PROSITE" id="PS50851">
    <property type="entry name" value="CHEW"/>
    <property type="match status" value="1"/>
</dbReference>
<name>FRZA_MYXXA</name>
<gene>
    <name type="primary">frzA</name>
</gene>
<organism>
    <name type="scientific">Myxococcus xanthus</name>
    <dbReference type="NCBI Taxonomy" id="34"/>
    <lineage>
        <taxon>Bacteria</taxon>
        <taxon>Pseudomonadati</taxon>
        <taxon>Myxococcota</taxon>
        <taxon>Myxococcia</taxon>
        <taxon>Myxococcales</taxon>
        <taxon>Cystobacterineae</taxon>
        <taxon>Myxococcaceae</taxon>
        <taxon>Myxococcus</taxon>
    </lineage>
</organism>
<comment type="function">
    <text>Necessary for proper aggregation of cells to form fruiting bodies. FRZ genes define a system of signal transduction analogous to the enterobacterial chemotaxis systems.</text>
</comment>
<keyword id="KW-0145">Chemotaxis</keyword>
<keyword id="KW-0807">Transducer</keyword>
<sequence length="160" mass="17110">MAPDRALAAQARPEQEFFCFRVGDLRLGVPSENVLEVLRAGLLTPLPRTPSFIMGVTGHRGEVLPVLDLLRFLSKGEARIGPRTRLFVGVTGSYVAGVVADTVLGLRRIPVADILPPPLGGDAAAEHLLGVVQASGNQEAINLLNFSKLLQTARQRAVAR</sequence>
<reference key="1">
    <citation type="journal article" date="1989" name="Proc. Natl. Acad. Sci. U.S.A.">
        <title>'Frizzy' aggregation genes of the gliding bacterium Myxococcus xanthus show sequence similarities to the chemotaxis genes of enteric bacteria.</title>
        <authorList>
            <person name="McBride M.J."/>
            <person name="Weinberg R.A."/>
            <person name="Zusman D.R."/>
        </authorList>
    </citation>
    <scope>NUCLEOTIDE SEQUENCE [GENOMIC DNA]</scope>
</reference>